<feature type="initiator methionine" description="Removed" evidence="1">
    <location>
        <position position="1"/>
    </location>
</feature>
<feature type="chain" id="PRO_0000170844" description="Formamidopyrimidine-DNA glycosylase">
    <location>
        <begin position="2"/>
        <end position="271"/>
    </location>
</feature>
<feature type="zinc finger region" description="FPG-type" evidence="2">
    <location>
        <begin position="237"/>
        <end position="271"/>
    </location>
</feature>
<feature type="active site" description="Schiff-base intermediate with DNA" evidence="2">
    <location>
        <position position="2"/>
    </location>
</feature>
<feature type="active site" description="Proton donor" evidence="2">
    <location>
        <position position="3"/>
    </location>
</feature>
<feature type="active site" description="Proton donor; for beta-elimination activity" evidence="2">
    <location>
        <position position="58"/>
    </location>
</feature>
<feature type="active site" description="Proton donor; for delta-elimination activity" evidence="2">
    <location>
        <position position="261"/>
    </location>
</feature>
<feature type="binding site" evidence="2">
    <location>
        <position position="91"/>
    </location>
    <ligand>
        <name>DNA</name>
        <dbReference type="ChEBI" id="CHEBI:16991"/>
    </ligand>
</feature>
<feature type="binding site" evidence="2">
    <location>
        <position position="110"/>
    </location>
    <ligand>
        <name>DNA</name>
        <dbReference type="ChEBI" id="CHEBI:16991"/>
    </ligand>
</feature>
<feature type="binding site" evidence="2">
    <location>
        <position position="152"/>
    </location>
    <ligand>
        <name>DNA</name>
        <dbReference type="ChEBI" id="CHEBI:16991"/>
    </ligand>
</feature>
<sequence length="271" mass="30303">MPELPEVEITRRGIDTHLAGRVITQISIRNPVLRWPISAGLIALLPGQRINAIARRAKYLLFACSRGTLIMHLGMSGNLRVLPESTPPQLHDHFDLQVDNGMMLRFRDPRRFGAILWWDGDIRQHPLLQKLGPEPLSDDFDGQFLYTKTRGRNASIKEVLMNQHIVVGIGNIYANEALFQAGISPLAAAGSLNTMQCERLVDAVKATLLRAIKAGGSSLRDFTDCEGSPGYFQQQYWVYGRAGQSCRQCGELVSKTRQGQRSTFFCARCQH</sequence>
<organism>
    <name type="scientific">Nitrosomonas europaea (strain ATCC 19718 / CIP 103999 / KCTC 2705 / NBRC 14298)</name>
    <dbReference type="NCBI Taxonomy" id="228410"/>
    <lineage>
        <taxon>Bacteria</taxon>
        <taxon>Pseudomonadati</taxon>
        <taxon>Pseudomonadota</taxon>
        <taxon>Betaproteobacteria</taxon>
        <taxon>Nitrosomonadales</taxon>
        <taxon>Nitrosomonadaceae</taxon>
        <taxon>Nitrosomonas</taxon>
    </lineage>
</organism>
<dbReference type="EC" id="3.2.2.23" evidence="2"/>
<dbReference type="EC" id="4.2.99.18" evidence="2"/>
<dbReference type="EMBL" id="AL954747">
    <property type="protein sequence ID" value="CAD86464.1"/>
    <property type="molecule type" value="Genomic_DNA"/>
</dbReference>
<dbReference type="RefSeq" id="WP_011113005.1">
    <property type="nucleotide sequence ID" value="NC_004757.1"/>
</dbReference>
<dbReference type="SMR" id="Q82S12"/>
<dbReference type="STRING" id="228410.NE2552"/>
<dbReference type="GeneID" id="87105680"/>
<dbReference type="KEGG" id="neu:NE2552"/>
<dbReference type="eggNOG" id="COG0266">
    <property type="taxonomic scope" value="Bacteria"/>
</dbReference>
<dbReference type="HOGENOM" id="CLU_038423_1_1_4"/>
<dbReference type="OrthoDB" id="9800855at2"/>
<dbReference type="PhylomeDB" id="Q82S12"/>
<dbReference type="Proteomes" id="UP000001416">
    <property type="component" value="Chromosome"/>
</dbReference>
<dbReference type="GO" id="GO:0034039">
    <property type="term" value="F:8-oxo-7,8-dihydroguanine DNA N-glycosylase activity"/>
    <property type="evidence" value="ECO:0007669"/>
    <property type="project" value="TreeGrafter"/>
</dbReference>
<dbReference type="GO" id="GO:0140078">
    <property type="term" value="F:class I DNA-(apurinic or apyrimidinic site) endonuclease activity"/>
    <property type="evidence" value="ECO:0007669"/>
    <property type="project" value="UniProtKB-EC"/>
</dbReference>
<dbReference type="GO" id="GO:0003684">
    <property type="term" value="F:damaged DNA binding"/>
    <property type="evidence" value="ECO:0007669"/>
    <property type="project" value="InterPro"/>
</dbReference>
<dbReference type="GO" id="GO:0008270">
    <property type="term" value="F:zinc ion binding"/>
    <property type="evidence" value="ECO:0007669"/>
    <property type="project" value="UniProtKB-UniRule"/>
</dbReference>
<dbReference type="GO" id="GO:0006284">
    <property type="term" value="P:base-excision repair"/>
    <property type="evidence" value="ECO:0007669"/>
    <property type="project" value="InterPro"/>
</dbReference>
<dbReference type="CDD" id="cd08966">
    <property type="entry name" value="EcFpg-like_N"/>
    <property type="match status" value="1"/>
</dbReference>
<dbReference type="FunFam" id="1.10.8.50:FF:000003">
    <property type="entry name" value="Formamidopyrimidine-DNA glycosylase"/>
    <property type="match status" value="1"/>
</dbReference>
<dbReference type="FunFam" id="3.20.190.10:FF:000001">
    <property type="entry name" value="Formamidopyrimidine-DNA glycosylase"/>
    <property type="match status" value="1"/>
</dbReference>
<dbReference type="Gene3D" id="1.10.8.50">
    <property type="match status" value="1"/>
</dbReference>
<dbReference type="Gene3D" id="3.20.190.10">
    <property type="entry name" value="MutM-like, N-terminal"/>
    <property type="match status" value="1"/>
</dbReference>
<dbReference type="HAMAP" id="MF_00103">
    <property type="entry name" value="Fapy_DNA_glycosyl"/>
    <property type="match status" value="1"/>
</dbReference>
<dbReference type="InterPro" id="IPR015886">
    <property type="entry name" value="DNA_glyclase/AP_lyase_DNA-bd"/>
</dbReference>
<dbReference type="InterPro" id="IPR015887">
    <property type="entry name" value="DNA_glyclase_Znf_dom_DNA_BS"/>
</dbReference>
<dbReference type="InterPro" id="IPR020629">
    <property type="entry name" value="Formamido-pyr_DNA_Glyclase"/>
</dbReference>
<dbReference type="InterPro" id="IPR012319">
    <property type="entry name" value="FPG_cat"/>
</dbReference>
<dbReference type="InterPro" id="IPR035937">
    <property type="entry name" value="MutM-like_N-ter"/>
</dbReference>
<dbReference type="InterPro" id="IPR010979">
    <property type="entry name" value="Ribosomal_uS13-like_H2TH"/>
</dbReference>
<dbReference type="InterPro" id="IPR000214">
    <property type="entry name" value="Znf_DNA_glyclase/AP_lyase"/>
</dbReference>
<dbReference type="InterPro" id="IPR010663">
    <property type="entry name" value="Znf_FPG/IleRS"/>
</dbReference>
<dbReference type="NCBIfam" id="TIGR00577">
    <property type="entry name" value="fpg"/>
    <property type="match status" value="1"/>
</dbReference>
<dbReference type="NCBIfam" id="NF002211">
    <property type="entry name" value="PRK01103.1"/>
    <property type="match status" value="1"/>
</dbReference>
<dbReference type="PANTHER" id="PTHR22993">
    <property type="entry name" value="FORMAMIDOPYRIMIDINE-DNA GLYCOSYLASE"/>
    <property type="match status" value="1"/>
</dbReference>
<dbReference type="PANTHER" id="PTHR22993:SF9">
    <property type="entry name" value="FORMAMIDOPYRIMIDINE-DNA GLYCOSYLASE"/>
    <property type="match status" value="1"/>
</dbReference>
<dbReference type="Pfam" id="PF01149">
    <property type="entry name" value="Fapy_DNA_glyco"/>
    <property type="match status" value="1"/>
</dbReference>
<dbReference type="Pfam" id="PF06831">
    <property type="entry name" value="H2TH"/>
    <property type="match status" value="1"/>
</dbReference>
<dbReference type="Pfam" id="PF06827">
    <property type="entry name" value="zf-FPG_IleRS"/>
    <property type="match status" value="1"/>
</dbReference>
<dbReference type="SMART" id="SM00898">
    <property type="entry name" value="Fapy_DNA_glyco"/>
    <property type="match status" value="1"/>
</dbReference>
<dbReference type="SMART" id="SM01232">
    <property type="entry name" value="H2TH"/>
    <property type="match status" value="1"/>
</dbReference>
<dbReference type="SUPFAM" id="SSF57716">
    <property type="entry name" value="Glucocorticoid receptor-like (DNA-binding domain)"/>
    <property type="match status" value="1"/>
</dbReference>
<dbReference type="SUPFAM" id="SSF81624">
    <property type="entry name" value="N-terminal domain of MutM-like DNA repair proteins"/>
    <property type="match status" value="1"/>
</dbReference>
<dbReference type="SUPFAM" id="SSF46946">
    <property type="entry name" value="S13-like H2TH domain"/>
    <property type="match status" value="1"/>
</dbReference>
<dbReference type="PROSITE" id="PS51068">
    <property type="entry name" value="FPG_CAT"/>
    <property type="match status" value="1"/>
</dbReference>
<dbReference type="PROSITE" id="PS01242">
    <property type="entry name" value="ZF_FPG_1"/>
    <property type="match status" value="1"/>
</dbReference>
<dbReference type="PROSITE" id="PS51066">
    <property type="entry name" value="ZF_FPG_2"/>
    <property type="match status" value="1"/>
</dbReference>
<proteinExistence type="inferred from homology"/>
<keyword id="KW-0227">DNA damage</keyword>
<keyword id="KW-0234">DNA repair</keyword>
<keyword id="KW-0238">DNA-binding</keyword>
<keyword id="KW-0326">Glycosidase</keyword>
<keyword id="KW-0378">Hydrolase</keyword>
<keyword id="KW-0456">Lyase</keyword>
<keyword id="KW-0479">Metal-binding</keyword>
<keyword id="KW-0511">Multifunctional enzyme</keyword>
<keyword id="KW-1185">Reference proteome</keyword>
<keyword id="KW-0862">Zinc</keyword>
<keyword id="KW-0863">Zinc-finger</keyword>
<evidence type="ECO:0000250" key="1"/>
<evidence type="ECO:0000255" key="2">
    <source>
        <dbReference type="HAMAP-Rule" id="MF_00103"/>
    </source>
</evidence>
<gene>
    <name evidence="2" type="primary">mutM</name>
    <name evidence="2" type="synonym">fpg</name>
    <name type="ordered locus">NE2552</name>
</gene>
<protein>
    <recommendedName>
        <fullName evidence="2">Formamidopyrimidine-DNA glycosylase</fullName>
        <shortName evidence="2">Fapy-DNA glycosylase</shortName>
        <ecNumber evidence="2">3.2.2.23</ecNumber>
    </recommendedName>
    <alternativeName>
        <fullName evidence="2">DNA-(apurinic or apyrimidinic site) lyase MutM</fullName>
        <shortName evidence="2">AP lyase MutM</shortName>
        <ecNumber evidence="2">4.2.99.18</ecNumber>
    </alternativeName>
</protein>
<comment type="function">
    <text evidence="2">Involved in base excision repair of DNA damaged by oxidation or by mutagenic agents. Acts as a DNA glycosylase that recognizes and removes damaged bases. Has a preference for oxidized purines, such as 7,8-dihydro-8-oxoguanine (8-oxoG). Has AP (apurinic/apyrimidinic) lyase activity and introduces nicks in the DNA strand. Cleaves the DNA backbone by beta-delta elimination to generate a single-strand break at the site of the removed base with both 3'- and 5'-phosphates.</text>
</comment>
<comment type="catalytic activity">
    <reaction evidence="2">
        <text>Hydrolysis of DNA containing ring-opened 7-methylguanine residues, releasing 2,6-diamino-4-hydroxy-5-(N-methyl)formamidopyrimidine.</text>
        <dbReference type="EC" id="3.2.2.23"/>
    </reaction>
</comment>
<comment type="catalytic activity">
    <reaction evidence="2">
        <text>2'-deoxyribonucleotide-(2'-deoxyribose 5'-phosphate)-2'-deoxyribonucleotide-DNA = a 3'-end 2'-deoxyribonucleotide-(2,3-dehydro-2,3-deoxyribose 5'-phosphate)-DNA + a 5'-end 5'-phospho-2'-deoxyribonucleoside-DNA + H(+)</text>
        <dbReference type="Rhea" id="RHEA:66592"/>
        <dbReference type="Rhea" id="RHEA-COMP:13180"/>
        <dbReference type="Rhea" id="RHEA-COMP:16897"/>
        <dbReference type="Rhea" id="RHEA-COMP:17067"/>
        <dbReference type="ChEBI" id="CHEBI:15378"/>
        <dbReference type="ChEBI" id="CHEBI:136412"/>
        <dbReference type="ChEBI" id="CHEBI:157695"/>
        <dbReference type="ChEBI" id="CHEBI:167181"/>
        <dbReference type="EC" id="4.2.99.18"/>
    </reaction>
</comment>
<comment type="cofactor">
    <cofactor evidence="2">
        <name>Zn(2+)</name>
        <dbReference type="ChEBI" id="CHEBI:29105"/>
    </cofactor>
    <text evidence="2">Binds 1 zinc ion per subunit.</text>
</comment>
<comment type="subunit">
    <text evidence="2">Monomer.</text>
</comment>
<comment type="similarity">
    <text evidence="2">Belongs to the FPG family.</text>
</comment>
<name>FPG_NITEU</name>
<reference key="1">
    <citation type="journal article" date="2003" name="J. Bacteriol.">
        <title>Complete genome sequence of the ammonia-oxidizing bacterium and obligate chemolithoautotroph Nitrosomonas europaea.</title>
        <authorList>
            <person name="Chain P."/>
            <person name="Lamerdin J.E."/>
            <person name="Larimer F.W."/>
            <person name="Regala W."/>
            <person name="Lao V."/>
            <person name="Land M.L."/>
            <person name="Hauser L."/>
            <person name="Hooper A.B."/>
            <person name="Klotz M.G."/>
            <person name="Norton J."/>
            <person name="Sayavedra-Soto L.A."/>
            <person name="Arciero D.M."/>
            <person name="Hommes N.G."/>
            <person name="Whittaker M.M."/>
            <person name="Arp D.J."/>
        </authorList>
    </citation>
    <scope>NUCLEOTIDE SEQUENCE [LARGE SCALE GENOMIC DNA]</scope>
    <source>
        <strain>ATCC 19718 / CIP 103999 / KCTC 2705 / NBRC 14298</strain>
    </source>
</reference>
<accession>Q82S12</accession>